<sequence>MSDINTTRLPFVFVASPPCVGDDIAMVLTRGENLC</sequence>
<proteinExistence type="evidence at transcript level"/>
<evidence type="ECO:0000250" key="1">
    <source>
        <dbReference type="UniProtKB" id="A0A067SLB9"/>
    </source>
</evidence>
<evidence type="ECO:0000269" key="2">
    <source>
    </source>
</evidence>
<evidence type="ECO:0000303" key="3">
    <source>
    </source>
</evidence>
<evidence type="ECO:0000305" key="4"/>
<evidence type="ECO:0000305" key="5">
    <source>
    </source>
</evidence>
<feature type="propeptide" id="PRO_0000443767" evidence="5">
    <location>
        <begin position="1"/>
        <end position="10"/>
    </location>
</feature>
<feature type="peptide" id="PRO_0000443768" description="Toxin MSD6" evidence="5">
    <location>
        <begin position="11"/>
        <end position="18"/>
    </location>
</feature>
<feature type="propeptide" id="PRO_0000443769" evidence="5">
    <location>
        <begin position="19"/>
        <end position="35"/>
    </location>
</feature>
<feature type="cross-link" description="Cyclopeptide (Phe-Pro)" evidence="5">
    <location>
        <begin position="11"/>
        <end position="18"/>
    </location>
</feature>
<keyword id="KW-0800">Toxin</keyword>
<comment type="function">
    <text evidence="5">Probable toxin that belongs to the MSDIN-like toxin family responsible for a large number of food poisoning cases and deaths (PubMed:24050899).</text>
</comment>
<comment type="tissue specificity">
    <text evidence="2">Expressed in basidiocarps (PubMed:24050899).</text>
</comment>
<comment type="PTM">
    <text evidence="1">Processed by the macrocyclase-peptidase enzyme POPB to yield a toxic cyclic octapeptide (By similarity). POPB first removes 10 residues from the N-terminus (By similarity). Conformational trapping of the remaining peptide forces the enzyme to release this intermediate rather than proceed to macrocyclization (By similarity). The enzyme rebinds the remaining peptide in a different conformation and catalyzes macrocyclization of the N-terminal 8 residues (By similarity).</text>
</comment>
<comment type="similarity">
    <text evidence="4">Belongs to the MSDIN fungal toxin family.</text>
</comment>
<protein>
    <recommendedName>
        <fullName evidence="3">MSDIN-like toxin proprotein 6</fullName>
    </recommendedName>
    <component>
        <recommendedName>
            <fullName evidence="3">Toxin MSD6</fullName>
        </recommendedName>
    </component>
</protein>
<reference key="1">
    <citation type="journal article" date="2013" name="Gene">
        <title>Illumina-based de novo transcriptome sequencing and analysis of Amanita exitialis basidiocarps.</title>
        <authorList>
            <person name="Li P."/>
            <person name="Deng W.Q."/>
            <person name="Li T.H."/>
            <person name="Song B."/>
            <person name="Shen Y.H."/>
        </authorList>
    </citation>
    <scope>NUCLEOTIDE SEQUENCE [MRNA]</scope>
    <scope>FUNCTION</scope>
    <scope>TISSUE SPECIFICITY</scope>
</reference>
<name>MSD6_AMAEX</name>
<organism>
    <name type="scientific">Amanita exitialis</name>
    <name type="common">Guangzhou destroying angel</name>
    <dbReference type="NCBI Taxonomy" id="262245"/>
    <lineage>
        <taxon>Eukaryota</taxon>
        <taxon>Fungi</taxon>
        <taxon>Dikarya</taxon>
        <taxon>Basidiomycota</taxon>
        <taxon>Agaricomycotina</taxon>
        <taxon>Agaricomycetes</taxon>
        <taxon>Agaricomycetidae</taxon>
        <taxon>Agaricales</taxon>
        <taxon>Pluteineae</taxon>
        <taxon>Amanitaceae</taxon>
        <taxon>Amanita</taxon>
    </lineage>
</organism>
<dbReference type="EMBL" id="KF387483">
    <property type="protein sequence ID" value="AGW83707.1"/>
    <property type="molecule type" value="mRNA"/>
</dbReference>
<dbReference type="GO" id="GO:0090729">
    <property type="term" value="F:toxin activity"/>
    <property type="evidence" value="ECO:0007669"/>
    <property type="project" value="UniProtKB-KW"/>
</dbReference>
<dbReference type="InterPro" id="IPR027582">
    <property type="entry name" value="Amanitin/phalloidin"/>
</dbReference>
<dbReference type="NCBIfam" id="TIGR04309">
    <property type="entry name" value="amanitin"/>
    <property type="match status" value="1"/>
</dbReference>
<accession>U5L396</accession>